<proteinExistence type="inferred from homology"/>
<sequence length="427" mass="45249">MKSVRVQPASNILGSVSFPGDKSISHRYGMLAALAEGTSRFKNFSTGADCASTLSCMEQLGAKVTHKDDGVIEVEGVAGQLRKSATQLDCGNSGSSMRMLSGILAAQPFDSELMGDASLSRRPMRRIVDPLKQMGGDIETTDGHAPLRVRGSKLTAIDYITPVPSAQVKSCVLFAGAFAAGITSVDEAIRTRDHGEIALKAFGAEVERRQNRVSVRGGAKFRAIEAVVPGDISSAAFFLCAAALFPTSNLVFDGILLNPSRAAILDVLASMGAKPKFLQVQEQHGELVGTITLAPAGLSGLKISGGLTASLIDELPVLAAIGAYTRYGIEIRDAKELRVKESDRIAVVCANLRAMGAEVEEFDDGLRVKGSQKLHGAEIESHEDHRIAMAFAVAALRAEGETVINGADCVAISYPEFFDTLNKVVER</sequence>
<name>AROA_KORVE</name>
<keyword id="KW-0028">Amino-acid biosynthesis</keyword>
<keyword id="KW-0057">Aromatic amino acid biosynthesis</keyword>
<keyword id="KW-0963">Cytoplasm</keyword>
<keyword id="KW-1185">Reference proteome</keyword>
<keyword id="KW-0808">Transferase</keyword>
<dbReference type="EC" id="2.5.1.19" evidence="1"/>
<dbReference type="EMBL" id="CP000360">
    <property type="protein sequence ID" value="ABF42615.1"/>
    <property type="status" value="ALT_INIT"/>
    <property type="molecule type" value="Genomic_DNA"/>
</dbReference>
<dbReference type="RefSeq" id="WP_041856917.1">
    <property type="nucleotide sequence ID" value="NC_008009.1"/>
</dbReference>
<dbReference type="SMR" id="Q1IKI5"/>
<dbReference type="STRING" id="204669.Acid345_3614"/>
<dbReference type="EnsemblBacteria" id="ABF42615">
    <property type="protein sequence ID" value="ABF42615"/>
    <property type="gene ID" value="Acid345_3614"/>
</dbReference>
<dbReference type="KEGG" id="aba:Acid345_3614"/>
<dbReference type="eggNOG" id="COG0128">
    <property type="taxonomic scope" value="Bacteria"/>
</dbReference>
<dbReference type="HOGENOM" id="CLU_024321_0_1_0"/>
<dbReference type="OrthoDB" id="9809920at2"/>
<dbReference type="UniPathway" id="UPA00053">
    <property type="reaction ID" value="UER00089"/>
</dbReference>
<dbReference type="Proteomes" id="UP000002432">
    <property type="component" value="Chromosome"/>
</dbReference>
<dbReference type="GO" id="GO:0005737">
    <property type="term" value="C:cytoplasm"/>
    <property type="evidence" value="ECO:0007669"/>
    <property type="project" value="UniProtKB-SubCell"/>
</dbReference>
<dbReference type="GO" id="GO:0003866">
    <property type="term" value="F:3-phosphoshikimate 1-carboxyvinyltransferase activity"/>
    <property type="evidence" value="ECO:0007669"/>
    <property type="project" value="UniProtKB-UniRule"/>
</dbReference>
<dbReference type="GO" id="GO:0008652">
    <property type="term" value="P:amino acid biosynthetic process"/>
    <property type="evidence" value="ECO:0007669"/>
    <property type="project" value="UniProtKB-KW"/>
</dbReference>
<dbReference type="GO" id="GO:0009073">
    <property type="term" value="P:aromatic amino acid family biosynthetic process"/>
    <property type="evidence" value="ECO:0007669"/>
    <property type="project" value="UniProtKB-KW"/>
</dbReference>
<dbReference type="GO" id="GO:0009423">
    <property type="term" value="P:chorismate biosynthetic process"/>
    <property type="evidence" value="ECO:0007669"/>
    <property type="project" value="UniProtKB-UniRule"/>
</dbReference>
<dbReference type="CDD" id="cd01556">
    <property type="entry name" value="EPSP_synthase"/>
    <property type="match status" value="1"/>
</dbReference>
<dbReference type="FunFam" id="3.65.10.10:FF:000005">
    <property type="entry name" value="3-phosphoshikimate 1-carboxyvinyltransferase"/>
    <property type="match status" value="1"/>
</dbReference>
<dbReference type="Gene3D" id="3.65.10.10">
    <property type="entry name" value="Enolpyruvate transferase domain"/>
    <property type="match status" value="2"/>
</dbReference>
<dbReference type="HAMAP" id="MF_00210">
    <property type="entry name" value="EPSP_synth"/>
    <property type="match status" value="1"/>
</dbReference>
<dbReference type="InterPro" id="IPR001986">
    <property type="entry name" value="Enolpyruvate_Tfrase_dom"/>
</dbReference>
<dbReference type="InterPro" id="IPR036968">
    <property type="entry name" value="Enolpyruvate_Tfrase_sf"/>
</dbReference>
<dbReference type="InterPro" id="IPR006264">
    <property type="entry name" value="EPSP_synthase"/>
</dbReference>
<dbReference type="InterPro" id="IPR023193">
    <property type="entry name" value="EPSP_synthase_CS"/>
</dbReference>
<dbReference type="InterPro" id="IPR013792">
    <property type="entry name" value="RNA3'P_cycl/enolpyr_Trfase_a/b"/>
</dbReference>
<dbReference type="NCBIfam" id="TIGR01356">
    <property type="entry name" value="aroA"/>
    <property type="match status" value="1"/>
</dbReference>
<dbReference type="PANTHER" id="PTHR21090">
    <property type="entry name" value="AROM/DEHYDROQUINATE SYNTHASE"/>
    <property type="match status" value="1"/>
</dbReference>
<dbReference type="PANTHER" id="PTHR21090:SF5">
    <property type="entry name" value="PENTAFUNCTIONAL AROM POLYPEPTIDE"/>
    <property type="match status" value="1"/>
</dbReference>
<dbReference type="Pfam" id="PF00275">
    <property type="entry name" value="EPSP_synthase"/>
    <property type="match status" value="1"/>
</dbReference>
<dbReference type="PIRSF" id="PIRSF000505">
    <property type="entry name" value="EPSPS"/>
    <property type="match status" value="1"/>
</dbReference>
<dbReference type="SUPFAM" id="SSF55205">
    <property type="entry name" value="EPT/RTPC-like"/>
    <property type="match status" value="1"/>
</dbReference>
<dbReference type="PROSITE" id="PS00885">
    <property type="entry name" value="EPSP_SYNTHASE_2"/>
    <property type="match status" value="1"/>
</dbReference>
<feature type="chain" id="PRO_0000325327" description="3-phosphoshikimate 1-carboxyvinyltransferase">
    <location>
        <begin position="1"/>
        <end position="427"/>
    </location>
</feature>
<feature type="active site" description="Proton acceptor" evidence="1">
    <location>
        <position position="313"/>
    </location>
</feature>
<feature type="binding site" evidence="1">
    <location>
        <position position="22"/>
    </location>
    <ligand>
        <name>3-phosphoshikimate</name>
        <dbReference type="ChEBI" id="CHEBI:145989"/>
    </ligand>
</feature>
<feature type="binding site" evidence="1">
    <location>
        <position position="22"/>
    </location>
    <ligand>
        <name>phosphoenolpyruvate</name>
        <dbReference type="ChEBI" id="CHEBI:58702"/>
    </ligand>
</feature>
<feature type="binding site" evidence="1">
    <location>
        <position position="23"/>
    </location>
    <ligand>
        <name>3-phosphoshikimate</name>
        <dbReference type="ChEBI" id="CHEBI:145989"/>
    </ligand>
</feature>
<feature type="binding site" evidence="1">
    <location>
        <position position="27"/>
    </location>
    <ligand>
        <name>3-phosphoshikimate</name>
        <dbReference type="ChEBI" id="CHEBI:145989"/>
    </ligand>
</feature>
<feature type="binding site" evidence="1">
    <location>
        <position position="94"/>
    </location>
    <ligand>
        <name>phosphoenolpyruvate</name>
        <dbReference type="ChEBI" id="CHEBI:58702"/>
    </ligand>
</feature>
<feature type="binding site" evidence="1">
    <location>
        <position position="122"/>
    </location>
    <ligand>
        <name>phosphoenolpyruvate</name>
        <dbReference type="ChEBI" id="CHEBI:58702"/>
    </ligand>
</feature>
<feature type="binding site" evidence="1">
    <location>
        <position position="165"/>
    </location>
    <ligand>
        <name>3-phosphoshikimate</name>
        <dbReference type="ChEBI" id="CHEBI:145989"/>
    </ligand>
</feature>
<feature type="binding site" evidence="1">
    <location>
        <position position="167"/>
    </location>
    <ligand>
        <name>3-phosphoshikimate</name>
        <dbReference type="ChEBI" id="CHEBI:145989"/>
    </ligand>
</feature>
<feature type="binding site" evidence="1">
    <location>
        <position position="167"/>
    </location>
    <ligand>
        <name>phosphoenolpyruvate</name>
        <dbReference type="ChEBI" id="CHEBI:58702"/>
    </ligand>
</feature>
<feature type="binding site" evidence="1">
    <location>
        <position position="313"/>
    </location>
    <ligand>
        <name>3-phosphoshikimate</name>
        <dbReference type="ChEBI" id="CHEBI:145989"/>
    </ligand>
</feature>
<feature type="binding site" evidence="1">
    <location>
        <position position="340"/>
    </location>
    <ligand>
        <name>3-phosphoshikimate</name>
        <dbReference type="ChEBI" id="CHEBI:145989"/>
    </ligand>
</feature>
<feature type="binding site" evidence="1">
    <location>
        <position position="344"/>
    </location>
    <ligand>
        <name>phosphoenolpyruvate</name>
        <dbReference type="ChEBI" id="CHEBI:58702"/>
    </ligand>
</feature>
<feature type="binding site" evidence="1">
    <location>
        <position position="386"/>
    </location>
    <ligand>
        <name>phosphoenolpyruvate</name>
        <dbReference type="ChEBI" id="CHEBI:58702"/>
    </ligand>
</feature>
<reference key="1">
    <citation type="journal article" date="2009" name="Appl. Environ. Microbiol.">
        <title>Three genomes from the phylum Acidobacteria provide insight into the lifestyles of these microorganisms in soils.</title>
        <authorList>
            <person name="Ward N.L."/>
            <person name="Challacombe J.F."/>
            <person name="Janssen P.H."/>
            <person name="Henrissat B."/>
            <person name="Coutinho P.M."/>
            <person name="Wu M."/>
            <person name="Xie G."/>
            <person name="Haft D.H."/>
            <person name="Sait M."/>
            <person name="Badger J."/>
            <person name="Barabote R.D."/>
            <person name="Bradley B."/>
            <person name="Brettin T.S."/>
            <person name="Brinkac L.M."/>
            <person name="Bruce D."/>
            <person name="Creasy T."/>
            <person name="Daugherty S.C."/>
            <person name="Davidsen T.M."/>
            <person name="DeBoy R.T."/>
            <person name="Detter J.C."/>
            <person name="Dodson R.J."/>
            <person name="Durkin A.S."/>
            <person name="Ganapathy A."/>
            <person name="Gwinn-Giglio M."/>
            <person name="Han C.S."/>
            <person name="Khouri H."/>
            <person name="Kiss H."/>
            <person name="Kothari S.P."/>
            <person name="Madupu R."/>
            <person name="Nelson K.E."/>
            <person name="Nelson W.C."/>
            <person name="Paulsen I."/>
            <person name="Penn K."/>
            <person name="Ren Q."/>
            <person name="Rosovitz M.J."/>
            <person name="Selengut J.D."/>
            <person name="Shrivastava S."/>
            <person name="Sullivan S.A."/>
            <person name="Tapia R."/>
            <person name="Thompson L.S."/>
            <person name="Watkins K.L."/>
            <person name="Yang Q."/>
            <person name="Yu C."/>
            <person name="Zafar N."/>
            <person name="Zhou L."/>
            <person name="Kuske C.R."/>
        </authorList>
    </citation>
    <scope>NUCLEOTIDE SEQUENCE [LARGE SCALE GENOMIC DNA]</scope>
    <source>
        <strain>Ellin345</strain>
    </source>
</reference>
<organism>
    <name type="scientific">Koribacter versatilis (strain Ellin345)</name>
    <dbReference type="NCBI Taxonomy" id="204669"/>
    <lineage>
        <taxon>Bacteria</taxon>
        <taxon>Pseudomonadati</taxon>
        <taxon>Acidobacteriota</taxon>
        <taxon>Terriglobia</taxon>
        <taxon>Terriglobales</taxon>
        <taxon>Candidatus Korobacteraceae</taxon>
        <taxon>Candidatus Korobacter</taxon>
    </lineage>
</organism>
<gene>
    <name evidence="1" type="primary">aroA</name>
    <name type="ordered locus">Acid345_3614</name>
</gene>
<protein>
    <recommendedName>
        <fullName evidence="1">3-phosphoshikimate 1-carboxyvinyltransferase</fullName>
        <ecNumber evidence="1">2.5.1.19</ecNumber>
    </recommendedName>
    <alternativeName>
        <fullName evidence="1">5-enolpyruvylshikimate-3-phosphate synthase</fullName>
        <shortName evidence="1">EPSP synthase</shortName>
        <shortName evidence="1">EPSPS</shortName>
    </alternativeName>
</protein>
<accession>Q1IKI5</accession>
<comment type="function">
    <text evidence="1">Catalyzes the transfer of the enolpyruvyl moiety of phosphoenolpyruvate (PEP) to the 5-hydroxyl of shikimate-3-phosphate (S3P) to produce enolpyruvyl shikimate-3-phosphate and inorganic phosphate.</text>
</comment>
<comment type="catalytic activity">
    <reaction evidence="1">
        <text>3-phosphoshikimate + phosphoenolpyruvate = 5-O-(1-carboxyvinyl)-3-phosphoshikimate + phosphate</text>
        <dbReference type="Rhea" id="RHEA:21256"/>
        <dbReference type="ChEBI" id="CHEBI:43474"/>
        <dbReference type="ChEBI" id="CHEBI:57701"/>
        <dbReference type="ChEBI" id="CHEBI:58702"/>
        <dbReference type="ChEBI" id="CHEBI:145989"/>
        <dbReference type="EC" id="2.5.1.19"/>
    </reaction>
    <physiologicalReaction direction="left-to-right" evidence="1">
        <dbReference type="Rhea" id="RHEA:21257"/>
    </physiologicalReaction>
</comment>
<comment type="pathway">
    <text evidence="1">Metabolic intermediate biosynthesis; chorismate biosynthesis; chorismate from D-erythrose 4-phosphate and phosphoenolpyruvate: step 6/7.</text>
</comment>
<comment type="subunit">
    <text evidence="1">Monomer.</text>
</comment>
<comment type="subcellular location">
    <subcellularLocation>
        <location evidence="1">Cytoplasm</location>
    </subcellularLocation>
</comment>
<comment type="similarity">
    <text evidence="1">Belongs to the EPSP synthase family.</text>
</comment>
<comment type="sequence caution" evidence="2">
    <conflict type="erroneous initiation">
        <sequence resource="EMBL-CDS" id="ABF42615"/>
    </conflict>
    <text>Extended N-terminus.</text>
</comment>
<evidence type="ECO:0000255" key="1">
    <source>
        <dbReference type="HAMAP-Rule" id="MF_00210"/>
    </source>
</evidence>
<evidence type="ECO:0000305" key="2"/>